<sequence length="297" mass="32364">MAAVQQKHDWADDDELEETSTELPPPQKITNKDGSTTIIEYRLNDNGQKVKTTRRIRYITHREVVNPRVAERKSWTKFGLSVKDGAGPAPDTTSVGENIIFKPSFNWRQEAKDESKDPNAQAMKDKLKDKKVKCRICNGEHFTARCPYKDTMAPIGEAGAAADVAASAADEAAAASQGAAGAGKKGSYVPPALRGAGGAAAAGERMGGKYGERDDLATLRVTNVSEMAEEQELRDMFERFGRVTRVFLAKDRDTGLAKGFAFISFADRSDAVKACAKMDGFGFRHLILRVEFAKKAA</sequence>
<feature type="chain" id="PRO_0000365448" description="Eukaryotic translation initiation factor 3 subunit G">
    <location>
        <begin position="1"/>
        <end position="297"/>
    </location>
</feature>
<feature type="domain" description="RRM" evidence="1">
    <location>
        <begin position="217"/>
        <end position="295"/>
    </location>
</feature>
<feature type="region of interest" description="Disordered" evidence="2">
    <location>
        <begin position="1"/>
        <end position="35"/>
    </location>
</feature>
<feature type="compositionally biased region" description="Basic and acidic residues" evidence="2">
    <location>
        <begin position="1"/>
        <end position="10"/>
    </location>
</feature>
<feature type="compositionally biased region" description="Acidic residues" evidence="2">
    <location>
        <begin position="11"/>
        <end position="20"/>
    </location>
</feature>
<gene>
    <name type="primary">eif3g</name>
    <name type="synonym">tif35</name>
    <name type="ORF">B2E7.140</name>
    <name type="ORF">NCU08046</name>
</gene>
<evidence type="ECO:0000255" key="1">
    <source>
        <dbReference type="HAMAP-Rule" id="MF_03006"/>
    </source>
</evidence>
<evidence type="ECO:0000256" key="2">
    <source>
        <dbReference type="SAM" id="MobiDB-lite"/>
    </source>
</evidence>
<evidence type="ECO:0000305" key="3"/>
<name>EIF3G_NEUCR</name>
<reference key="1">
    <citation type="journal article" date="2003" name="Nucleic Acids Res.">
        <title>What's in the genome of a filamentous fungus? Analysis of the Neurospora genome sequence.</title>
        <authorList>
            <person name="Mannhaupt G."/>
            <person name="Montrone C."/>
            <person name="Haase D."/>
            <person name="Mewes H.-W."/>
            <person name="Aign V."/>
            <person name="Hoheisel J.D."/>
            <person name="Fartmann B."/>
            <person name="Nyakatura G."/>
            <person name="Kempken F."/>
            <person name="Maier J."/>
            <person name="Schulte U."/>
        </authorList>
    </citation>
    <scope>NUCLEOTIDE SEQUENCE [LARGE SCALE GENOMIC DNA]</scope>
    <source>
        <strain>ATCC 24698 / 74-OR23-1A / CBS 708.71 / DSM 1257 / FGSC 987</strain>
    </source>
</reference>
<reference key="2">
    <citation type="journal article" date="2003" name="Nature">
        <title>The genome sequence of the filamentous fungus Neurospora crassa.</title>
        <authorList>
            <person name="Galagan J.E."/>
            <person name="Calvo S.E."/>
            <person name="Borkovich K.A."/>
            <person name="Selker E.U."/>
            <person name="Read N.D."/>
            <person name="Jaffe D.B."/>
            <person name="FitzHugh W."/>
            <person name="Ma L.-J."/>
            <person name="Smirnov S."/>
            <person name="Purcell S."/>
            <person name="Rehman B."/>
            <person name="Elkins T."/>
            <person name="Engels R."/>
            <person name="Wang S."/>
            <person name="Nielsen C.B."/>
            <person name="Butler J."/>
            <person name="Endrizzi M."/>
            <person name="Qui D."/>
            <person name="Ianakiev P."/>
            <person name="Bell-Pedersen D."/>
            <person name="Nelson M.A."/>
            <person name="Werner-Washburne M."/>
            <person name="Selitrennikoff C.P."/>
            <person name="Kinsey J.A."/>
            <person name="Braun E.L."/>
            <person name="Zelter A."/>
            <person name="Schulte U."/>
            <person name="Kothe G.O."/>
            <person name="Jedd G."/>
            <person name="Mewes H.-W."/>
            <person name="Staben C."/>
            <person name="Marcotte E."/>
            <person name="Greenberg D."/>
            <person name="Roy A."/>
            <person name="Foley K."/>
            <person name="Naylor J."/>
            <person name="Stange-Thomann N."/>
            <person name="Barrett R."/>
            <person name="Gnerre S."/>
            <person name="Kamal M."/>
            <person name="Kamvysselis M."/>
            <person name="Mauceli E.W."/>
            <person name="Bielke C."/>
            <person name="Rudd S."/>
            <person name="Frishman D."/>
            <person name="Krystofova S."/>
            <person name="Rasmussen C."/>
            <person name="Metzenberg R.L."/>
            <person name="Perkins D.D."/>
            <person name="Kroken S."/>
            <person name="Cogoni C."/>
            <person name="Macino G."/>
            <person name="Catcheside D.E.A."/>
            <person name="Li W."/>
            <person name="Pratt R.J."/>
            <person name="Osmani S.A."/>
            <person name="DeSouza C.P.C."/>
            <person name="Glass N.L."/>
            <person name="Orbach M.J."/>
            <person name="Berglund J.A."/>
            <person name="Voelker R."/>
            <person name="Yarden O."/>
            <person name="Plamann M."/>
            <person name="Seiler S."/>
            <person name="Dunlap J.C."/>
            <person name="Radford A."/>
            <person name="Aramayo R."/>
            <person name="Natvig D.O."/>
            <person name="Alex L.A."/>
            <person name="Mannhaupt G."/>
            <person name="Ebbole D.J."/>
            <person name="Freitag M."/>
            <person name="Paulsen I."/>
            <person name="Sachs M.S."/>
            <person name="Lander E.S."/>
            <person name="Nusbaum C."/>
            <person name="Birren B.W."/>
        </authorList>
    </citation>
    <scope>NUCLEOTIDE SEQUENCE [LARGE SCALE GENOMIC DNA]</scope>
    <source>
        <strain>ATCC 24698 / 74-OR23-1A / CBS 708.71 / DSM 1257 / FGSC 987</strain>
    </source>
</reference>
<dbReference type="EMBL" id="BX897675">
    <property type="protein sequence ID" value="CAE85545.1"/>
    <property type="status" value="ALT_SEQ"/>
    <property type="molecule type" value="Genomic_DNA"/>
</dbReference>
<dbReference type="EMBL" id="CM002239">
    <property type="protein sequence ID" value="EAA33480.3"/>
    <property type="status" value="ALT_SEQ"/>
    <property type="molecule type" value="Genomic_DNA"/>
</dbReference>
<dbReference type="RefSeq" id="XP_962716.3">
    <property type="nucleotide sequence ID" value="XM_957623.3"/>
</dbReference>
<dbReference type="SMR" id="Q6MFP4"/>
<dbReference type="FunCoup" id="Q6MFP4">
    <property type="interactions" value="1068"/>
</dbReference>
<dbReference type="STRING" id="367110.Q6MFP4"/>
<dbReference type="PaxDb" id="5141-EFNCRP00000008274"/>
<dbReference type="EnsemblFungi" id="EAA33480">
    <property type="protein sequence ID" value="EAA33480"/>
    <property type="gene ID" value="NCU08046"/>
</dbReference>
<dbReference type="GeneID" id="3878823"/>
<dbReference type="KEGG" id="ncr:NCU08046"/>
<dbReference type="HOGENOM" id="CLU_034595_0_0_1"/>
<dbReference type="InParanoid" id="Q6MFP4"/>
<dbReference type="OMA" id="ICQGDHF"/>
<dbReference type="OrthoDB" id="639027at2759"/>
<dbReference type="Proteomes" id="UP000001805">
    <property type="component" value="Chromosome 4, Linkage Group IV"/>
</dbReference>
<dbReference type="GO" id="GO:0016282">
    <property type="term" value="C:eukaryotic 43S preinitiation complex"/>
    <property type="evidence" value="ECO:0007669"/>
    <property type="project" value="UniProtKB-UniRule"/>
</dbReference>
<dbReference type="GO" id="GO:0033290">
    <property type="term" value="C:eukaryotic 48S preinitiation complex"/>
    <property type="evidence" value="ECO:0007669"/>
    <property type="project" value="UniProtKB-UniRule"/>
</dbReference>
<dbReference type="GO" id="GO:0071540">
    <property type="term" value="C:eukaryotic translation initiation factor 3 complex, eIF3e"/>
    <property type="evidence" value="ECO:0007669"/>
    <property type="project" value="EnsemblFungi"/>
</dbReference>
<dbReference type="GO" id="GO:0071541">
    <property type="term" value="C:eukaryotic translation initiation factor 3 complex, eIF3m"/>
    <property type="evidence" value="ECO:0007669"/>
    <property type="project" value="EnsemblFungi"/>
</dbReference>
<dbReference type="GO" id="GO:0003723">
    <property type="term" value="F:RNA binding"/>
    <property type="evidence" value="ECO:0007669"/>
    <property type="project" value="UniProtKB-UniRule"/>
</dbReference>
<dbReference type="GO" id="GO:0003743">
    <property type="term" value="F:translation initiation factor activity"/>
    <property type="evidence" value="ECO:0007669"/>
    <property type="project" value="UniProtKB-UniRule"/>
</dbReference>
<dbReference type="GO" id="GO:0001732">
    <property type="term" value="P:formation of cytoplasmic translation initiation complex"/>
    <property type="evidence" value="ECO:0007669"/>
    <property type="project" value="UniProtKB-UniRule"/>
</dbReference>
<dbReference type="CDD" id="cd12933">
    <property type="entry name" value="eIF3G"/>
    <property type="match status" value="1"/>
</dbReference>
<dbReference type="CDD" id="cd12408">
    <property type="entry name" value="RRM_eIF3G_like"/>
    <property type="match status" value="1"/>
</dbReference>
<dbReference type="FunFam" id="3.30.70.330:FF:000328">
    <property type="entry name" value="Eukaryotic translation initiation factor 3 subunit G"/>
    <property type="match status" value="1"/>
</dbReference>
<dbReference type="Gene3D" id="3.30.70.330">
    <property type="match status" value="1"/>
</dbReference>
<dbReference type="HAMAP" id="MF_03006">
    <property type="entry name" value="eIF3g"/>
    <property type="match status" value="1"/>
</dbReference>
<dbReference type="InterPro" id="IPR017334">
    <property type="entry name" value="eIF3_g"/>
</dbReference>
<dbReference type="InterPro" id="IPR024675">
    <property type="entry name" value="eIF3g_N"/>
</dbReference>
<dbReference type="InterPro" id="IPR034240">
    <property type="entry name" value="eIF3G_RRM"/>
</dbReference>
<dbReference type="InterPro" id="IPR012677">
    <property type="entry name" value="Nucleotide-bd_a/b_plait_sf"/>
</dbReference>
<dbReference type="InterPro" id="IPR035979">
    <property type="entry name" value="RBD_domain_sf"/>
</dbReference>
<dbReference type="InterPro" id="IPR000504">
    <property type="entry name" value="RRM_dom"/>
</dbReference>
<dbReference type="PANTHER" id="PTHR10352">
    <property type="entry name" value="EUKARYOTIC TRANSLATION INITIATION FACTOR 3 SUBUNIT G"/>
    <property type="match status" value="1"/>
</dbReference>
<dbReference type="Pfam" id="PF12353">
    <property type="entry name" value="eIF3g"/>
    <property type="match status" value="1"/>
</dbReference>
<dbReference type="Pfam" id="PF00076">
    <property type="entry name" value="RRM_1"/>
    <property type="match status" value="1"/>
</dbReference>
<dbReference type="PIRSF" id="PIRSF037949">
    <property type="entry name" value="Transl_init_eIF-3_RNA-bind"/>
    <property type="match status" value="1"/>
</dbReference>
<dbReference type="SMART" id="SM00360">
    <property type="entry name" value="RRM"/>
    <property type="match status" value="1"/>
</dbReference>
<dbReference type="SUPFAM" id="SSF54928">
    <property type="entry name" value="RNA-binding domain, RBD"/>
    <property type="match status" value="1"/>
</dbReference>
<dbReference type="PROSITE" id="PS50102">
    <property type="entry name" value="RRM"/>
    <property type="match status" value="1"/>
</dbReference>
<organism>
    <name type="scientific">Neurospora crassa (strain ATCC 24698 / 74-OR23-1A / CBS 708.71 / DSM 1257 / FGSC 987)</name>
    <dbReference type="NCBI Taxonomy" id="367110"/>
    <lineage>
        <taxon>Eukaryota</taxon>
        <taxon>Fungi</taxon>
        <taxon>Dikarya</taxon>
        <taxon>Ascomycota</taxon>
        <taxon>Pezizomycotina</taxon>
        <taxon>Sordariomycetes</taxon>
        <taxon>Sordariomycetidae</taxon>
        <taxon>Sordariales</taxon>
        <taxon>Sordariaceae</taxon>
        <taxon>Neurospora</taxon>
    </lineage>
</organism>
<proteinExistence type="inferred from homology"/>
<comment type="function">
    <text evidence="1">RNA-binding component of the eukaryotic translation initiation factor 3 (eIF-3) complex, which is involved in protein synthesis of a specialized repertoire of mRNAs and, together with other initiation factors, stimulates binding of mRNA and methionyl-tRNAi to the 40S ribosome. The eIF-3 complex specifically targets and initiates translation of a subset of mRNAs involved in cell proliferation. This subunit can bind 18S rRNA.</text>
</comment>
<comment type="subunit">
    <text evidence="1">Component of the eukaryotic translation initiation factor 3 (eIF-3) complex.</text>
</comment>
<comment type="subcellular location">
    <subcellularLocation>
        <location evidence="1">Cytoplasm</location>
    </subcellularLocation>
</comment>
<comment type="similarity">
    <text evidence="1">Belongs to the eIF-3 subunit G family.</text>
</comment>
<comment type="sequence caution" evidence="3">
    <conflict type="erroneous gene model prediction">
        <sequence resource="EMBL-CDS" id="CAE85545"/>
    </conflict>
</comment>
<comment type="sequence caution" evidence="3">
    <conflict type="erroneous gene model prediction">
        <sequence resource="EMBL-CDS" id="EAA33480"/>
    </conflict>
</comment>
<accession>Q6MFP4</accession>
<accession>Q7SAJ5</accession>
<keyword id="KW-0963">Cytoplasm</keyword>
<keyword id="KW-0396">Initiation factor</keyword>
<keyword id="KW-0648">Protein biosynthesis</keyword>
<keyword id="KW-1185">Reference proteome</keyword>
<keyword id="KW-0694">RNA-binding</keyword>
<protein>
    <recommendedName>
        <fullName evidence="1">Eukaryotic translation initiation factor 3 subunit G</fullName>
        <shortName evidence="1">eIF3g</shortName>
    </recommendedName>
    <alternativeName>
        <fullName evidence="1">Eukaryotic translation initiation factor 3 RNA-binding subunit</fullName>
        <shortName evidence="1">eIF-3 RNA-binding subunit</shortName>
    </alternativeName>
    <alternativeName>
        <fullName evidence="1">Translation initiation factor eIF3 p33 subunit homolog</fullName>
        <shortName evidence="1">eIF3 p33 homolog</shortName>
    </alternativeName>
</protein>